<organism>
    <name type="scientific">Xylella fastidiosa (strain Temecula1 / ATCC 700964)</name>
    <dbReference type="NCBI Taxonomy" id="183190"/>
    <lineage>
        <taxon>Bacteria</taxon>
        <taxon>Pseudomonadati</taxon>
        <taxon>Pseudomonadota</taxon>
        <taxon>Gammaproteobacteria</taxon>
        <taxon>Lysobacterales</taxon>
        <taxon>Lysobacteraceae</taxon>
        <taxon>Xylella</taxon>
    </lineage>
</organism>
<evidence type="ECO:0000255" key="1">
    <source>
        <dbReference type="HAMAP-Rule" id="MF_00409"/>
    </source>
</evidence>
<sequence>MSSGRGSRIPEYWYGQVPVPPFMRFMEVIYAGAVSLRRLAYRRGWRRRYGVAVPVVVIGNLVAGGTGKTPLTIEIVARLREAGWTPGIASRGYGRRDPKTPRWIQPDTPIELAGDEPAMIAWKTGMRVRVDVDRSAAARALVAEGCDIVVCDDGLQHYRLMRDIEIEVIDGQRRYGNGHLLPAGPLREPMVRGRLCDFRVLNAGQYSDRPTSGFGPSDWQMRLHIDHAQSLQGSRRRSLDAFSGQRVHAVAGIAHPERFFSMLRQRGIGVVPHAFPDHHFYRAEDFTFGSRLPVLMTEKDAVKCRAFADDWFFSVPLRVELPTVFWTALFDRLERLVSC</sequence>
<feature type="chain" id="PRO_0000190961" description="Tetraacyldisaccharide 4'-kinase">
    <location>
        <begin position="1"/>
        <end position="339"/>
    </location>
</feature>
<feature type="binding site" evidence="1">
    <location>
        <begin position="62"/>
        <end position="69"/>
    </location>
    <ligand>
        <name>ATP</name>
        <dbReference type="ChEBI" id="CHEBI:30616"/>
    </ligand>
</feature>
<dbReference type="EC" id="2.7.1.130" evidence="1"/>
<dbReference type="EMBL" id="AE009442">
    <property type="protein sequence ID" value="AAO28242.1"/>
    <property type="molecule type" value="Genomic_DNA"/>
</dbReference>
<dbReference type="RefSeq" id="WP_004089261.1">
    <property type="nucleotide sequence ID" value="NC_004556.1"/>
</dbReference>
<dbReference type="SMR" id="Q87EE9"/>
<dbReference type="GeneID" id="93904063"/>
<dbReference type="KEGG" id="xft:PD_0362"/>
<dbReference type="HOGENOM" id="CLU_038816_2_0_6"/>
<dbReference type="UniPathway" id="UPA00359">
    <property type="reaction ID" value="UER00482"/>
</dbReference>
<dbReference type="Proteomes" id="UP000002516">
    <property type="component" value="Chromosome"/>
</dbReference>
<dbReference type="GO" id="GO:0005886">
    <property type="term" value="C:plasma membrane"/>
    <property type="evidence" value="ECO:0007669"/>
    <property type="project" value="TreeGrafter"/>
</dbReference>
<dbReference type="GO" id="GO:0005524">
    <property type="term" value="F:ATP binding"/>
    <property type="evidence" value="ECO:0007669"/>
    <property type="project" value="UniProtKB-UniRule"/>
</dbReference>
<dbReference type="GO" id="GO:0009029">
    <property type="term" value="F:tetraacyldisaccharide 4'-kinase activity"/>
    <property type="evidence" value="ECO:0007669"/>
    <property type="project" value="UniProtKB-UniRule"/>
</dbReference>
<dbReference type="GO" id="GO:0009245">
    <property type="term" value="P:lipid A biosynthetic process"/>
    <property type="evidence" value="ECO:0007669"/>
    <property type="project" value="UniProtKB-UniRule"/>
</dbReference>
<dbReference type="GO" id="GO:0009244">
    <property type="term" value="P:lipopolysaccharide core region biosynthetic process"/>
    <property type="evidence" value="ECO:0007669"/>
    <property type="project" value="TreeGrafter"/>
</dbReference>
<dbReference type="HAMAP" id="MF_00409">
    <property type="entry name" value="LpxK"/>
    <property type="match status" value="1"/>
</dbReference>
<dbReference type="InterPro" id="IPR003758">
    <property type="entry name" value="LpxK"/>
</dbReference>
<dbReference type="InterPro" id="IPR027417">
    <property type="entry name" value="P-loop_NTPase"/>
</dbReference>
<dbReference type="NCBIfam" id="TIGR00682">
    <property type="entry name" value="lpxK"/>
    <property type="match status" value="1"/>
</dbReference>
<dbReference type="PANTHER" id="PTHR42724">
    <property type="entry name" value="TETRAACYLDISACCHARIDE 4'-KINASE"/>
    <property type="match status" value="1"/>
</dbReference>
<dbReference type="PANTHER" id="PTHR42724:SF1">
    <property type="entry name" value="TETRAACYLDISACCHARIDE 4'-KINASE, MITOCHONDRIAL-RELATED"/>
    <property type="match status" value="1"/>
</dbReference>
<dbReference type="Pfam" id="PF02606">
    <property type="entry name" value="LpxK"/>
    <property type="match status" value="1"/>
</dbReference>
<dbReference type="SUPFAM" id="SSF52540">
    <property type="entry name" value="P-loop containing nucleoside triphosphate hydrolases"/>
    <property type="match status" value="1"/>
</dbReference>
<keyword id="KW-0067">ATP-binding</keyword>
<keyword id="KW-0418">Kinase</keyword>
<keyword id="KW-0441">Lipid A biosynthesis</keyword>
<keyword id="KW-0444">Lipid biosynthesis</keyword>
<keyword id="KW-0443">Lipid metabolism</keyword>
<keyword id="KW-0547">Nucleotide-binding</keyword>
<keyword id="KW-1185">Reference proteome</keyword>
<keyword id="KW-0808">Transferase</keyword>
<protein>
    <recommendedName>
        <fullName evidence="1">Tetraacyldisaccharide 4'-kinase</fullName>
        <ecNumber evidence="1">2.7.1.130</ecNumber>
    </recommendedName>
    <alternativeName>
        <fullName evidence="1">Lipid A 4'-kinase</fullName>
    </alternativeName>
</protein>
<accession>Q87EE9</accession>
<proteinExistence type="inferred from homology"/>
<comment type="function">
    <text evidence="1">Transfers the gamma-phosphate of ATP to the 4'-position of a tetraacyldisaccharide 1-phosphate intermediate (termed DS-1-P) to form tetraacyldisaccharide 1,4'-bis-phosphate (lipid IVA).</text>
</comment>
<comment type="catalytic activity">
    <reaction evidence="1">
        <text>a lipid A disaccharide + ATP = a lipid IVA + ADP + H(+)</text>
        <dbReference type="Rhea" id="RHEA:67840"/>
        <dbReference type="ChEBI" id="CHEBI:15378"/>
        <dbReference type="ChEBI" id="CHEBI:30616"/>
        <dbReference type="ChEBI" id="CHEBI:176343"/>
        <dbReference type="ChEBI" id="CHEBI:176425"/>
        <dbReference type="ChEBI" id="CHEBI:456216"/>
        <dbReference type="EC" id="2.7.1.130"/>
    </reaction>
</comment>
<comment type="pathway">
    <text evidence="1">Glycolipid biosynthesis; lipid IV(A) biosynthesis; lipid IV(A) from (3R)-3-hydroxytetradecanoyl-[acyl-carrier-protein] and UDP-N-acetyl-alpha-D-glucosamine: step 6/6.</text>
</comment>
<comment type="similarity">
    <text evidence="1">Belongs to the LpxK family.</text>
</comment>
<name>LPXK_XYLFT</name>
<reference key="1">
    <citation type="journal article" date="2003" name="J. Bacteriol.">
        <title>Comparative analyses of the complete genome sequences of Pierce's disease and citrus variegated chlorosis strains of Xylella fastidiosa.</title>
        <authorList>
            <person name="Van Sluys M.A."/>
            <person name="de Oliveira M.C."/>
            <person name="Monteiro-Vitorello C.B."/>
            <person name="Miyaki C.Y."/>
            <person name="Furlan L.R."/>
            <person name="Camargo L.E.A."/>
            <person name="da Silva A.C.R."/>
            <person name="Moon D.H."/>
            <person name="Takita M.A."/>
            <person name="Lemos E.G.M."/>
            <person name="Machado M.A."/>
            <person name="Ferro M.I.T."/>
            <person name="da Silva F.R."/>
            <person name="Goldman M.H.S."/>
            <person name="Goldman G.H."/>
            <person name="Lemos M.V.F."/>
            <person name="El-Dorry H."/>
            <person name="Tsai S.M."/>
            <person name="Carrer H."/>
            <person name="Carraro D.M."/>
            <person name="de Oliveira R.C."/>
            <person name="Nunes L.R."/>
            <person name="Siqueira W.J."/>
            <person name="Coutinho L.L."/>
            <person name="Kimura E.T."/>
            <person name="Ferro E.S."/>
            <person name="Harakava R."/>
            <person name="Kuramae E.E."/>
            <person name="Marino C.L."/>
            <person name="Giglioti E."/>
            <person name="Abreu I.L."/>
            <person name="Alves L.M.C."/>
            <person name="do Amaral A.M."/>
            <person name="Baia G.S."/>
            <person name="Blanco S.R."/>
            <person name="Brito M.S."/>
            <person name="Cannavan F.S."/>
            <person name="Celestino A.V."/>
            <person name="da Cunha A.F."/>
            <person name="Fenille R.C."/>
            <person name="Ferro J.A."/>
            <person name="Formighieri E.F."/>
            <person name="Kishi L.T."/>
            <person name="Leoni S.G."/>
            <person name="Oliveira A.R."/>
            <person name="Rosa V.E. Jr."/>
            <person name="Sassaki F.T."/>
            <person name="Sena J.A.D."/>
            <person name="de Souza A.A."/>
            <person name="Truffi D."/>
            <person name="Tsukumo F."/>
            <person name="Yanai G.M."/>
            <person name="Zaros L.G."/>
            <person name="Civerolo E.L."/>
            <person name="Simpson A.J.G."/>
            <person name="Almeida N.F. Jr."/>
            <person name="Setubal J.C."/>
            <person name="Kitajima J.P."/>
        </authorList>
    </citation>
    <scope>NUCLEOTIDE SEQUENCE [LARGE SCALE GENOMIC DNA]</scope>
    <source>
        <strain>Temecula1 / ATCC 700964</strain>
    </source>
</reference>
<gene>
    <name evidence="1" type="primary">lpxK</name>
    <name type="ordered locus">PD_0362</name>
</gene>